<reference key="1">
    <citation type="submission" date="2007-08" db="EMBL/GenBank/DDBJ databases">
        <authorList>
            <consortium name="The Vibrio harveyi Genome Sequencing Project"/>
            <person name="Bassler B."/>
            <person name="Clifton S.W."/>
            <person name="Fulton L."/>
            <person name="Delehaunty K."/>
            <person name="Fronick C."/>
            <person name="Harrison M."/>
            <person name="Markivic C."/>
            <person name="Fulton R."/>
            <person name="Tin-Wollam A.-M."/>
            <person name="Shah N."/>
            <person name="Pepin K."/>
            <person name="Nash W."/>
            <person name="Thiruvilangam P."/>
            <person name="Bhonagiri V."/>
            <person name="Waters C."/>
            <person name="Tu K.C."/>
            <person name="Irgon J."/>
            <person name="Wilson R.K."/>
        </authorList>
    </citation>
    <scope>NUCLEOTIDE SEQUENCE [LARGE SCALE GENOMIC DNA]</scope>
    <source>
        <strain>ATCC BAA-1116 / BB120</strain>
    </source>
</reference>
<feature type="chain" id="PRO_0000354949" description="Catalase-peroxidase">
    <location>
        <begin position="1"/>
        <end position="726"/>
    </location>
</feature>
<feature type="active site" description="Proton acceptor" evidence="1">
    <location>
        <position position="97"/>
    </location>
</feature>
<feature type="binding site" description="axial binding residue" evidence="1">
    <location>
        <position position="265"/>
    </location>
    <ligand>
        <name>heme b</name>
        <dbReference type="ChEBI" id="CHEBI:60344"/>
    </ligand>
    <ligandPart>
        <name>Fe</name>
        <dbReference type="ChEBI" id="CHEBI:18248"/>
    </ligandPart>
</feature>
<feature type="site" description="Transition state stabilizer" evidence="1">
    <location>
        <position position="93"/>
    </location>
</feature>
<feature type="cross-link" description="Tryptophyl-tyrosyl-methioninium (Trp-Tyr) (with M-250)" evidence="1">
    <location>
        <begin position="96"/>
        <end position="224"/>
    </location>
</feature>
<feature type="cross-link" description="Tryptophyl-tyrosyl-methioninium (Tyr-Met) (with W-96)" evidence="1">
    <location>
        <begin position="224"/>
        <end position="250"/>
    </location>
</feature>
<proteinExistence type="inferred from homology"/>
<keyword id="KW-0349">Heme</keyword>
<keyword id="KW-0376">Hydrogen peroxide</keyword>
<keyword id="KW-0408">Iron</keyword>
<keyword id="KW-0479">Metal-binding</keyword>
<keyword id="KW-0560">Oxidoreductase</keyword>
<keyword id="KW-0575">Peroxidase</keyword>
<evidence type="ECO:0000255" key="1">
    <source>
        <dbReference type="HAMAP-Rule" id="MF_01961"/>
    </source>
</evidence>
<dbReference type="EC" id="1.11.1.21" evidence="1"/>
<dbReference type="EMBL" id="CP000789">
    <property type="protein sequence ID" value="ABU70742.1"/>
    <property type="molecule type" value="Genomic_DNA"/>
</dbReference>
<dbReference type="RefSeq" id="WP_012127584.1">
    <property type="nucleotide sequence ID" value="NC_009783.1"/>
</dbReference>
<dbReference type="SMR" id="A7MZ01"/>
<dbReference type="KEGG" id="vha:VIBHAR_01773"/>
<dbReference type="PATRIC" id="fig|338187.25.peg.904"/>
<dbReference type="Proteomes" id="UP000008152">
    <property type="component" value="Chromosome I"/>
</dbReference>
<dbReference type="GO" id="GO:0005829">
    <property type="term" value="C:cytosol"/>
    <property type="evidence" value="ECO:0007669"/>
    <property type="project" value="TreeGrafter"/>
</dbReference>
<dbReference type="GO" id="GO:0004096">
    <property type="term" value="F:catalase activity"/>
    <property type="evidence" value="ECO:0007669"/>
    <property type="project" value="UniProtKB-UniRule"/>
</dbReference>
<dbReference type="GO" id="GO:0020037">
    <property type="term" value="F:heme binding"/>
    <property type="evidence" value="ECO:0007669"/>
    <property type="project" value="InterPro"/>
</dbReference>
<dbReference type="GO" id="GO:0046872">
    <property type="term" value="F:metal ion binding"/>
    <property type="evidence" value="ECO:0007669"/>
    <property type="project" value="UniProtKB-KW"/>
</dbReference>
<dbReference type="GO" id="GO:0070301">
    <property type="term" value="P:cellular response to hydrogen peroxide"/>
    <property type="evidence" value="ECO:0007669"/>
    <property type="project" value="TreeGrafter"/>
</dbReference>
<dbReference type="GO" id="GO:0042744">
    <property type="term" value="P:hydrogen peroxide catabolic process"/>
    <property type="evidence" value="ECO:0007669"/>
    <property type="project" value="UniProtKB-KW"/>
</dbReference>
<dbReference type="CDD" id="cd00649">
    <property type="entry name" value="catalase_peroxidase_1"/>
    <property type="match status" value="1"/>
</dbReference>
<dbReference type="CDD" id="cd08200">
    <property type="entry name" value="catalase_peroxidase_2"/>
    <property type="match status" value="1"/>
</dbReference>
<dbReference type="FunFam" id="1.10.420.10:FF:000002">
    <property type="entry name" value="Catalase-peroxidase"/>
    <property type="match status" value="1"/>
</dbReference>
<dbReference type="FunFam" id="1.10.420.10:FF:000004">
    <property type="entry name" value="Catalase-peroxidase"/>
    <property type="match status" value="1"/>
</dbReference>
<dbReference type="FunFam" id="1.10.520.10:FF:000002">
    <property type="entry name" value="Catalase-peroxidase"/>
    <property type="match status" value="1"/>
</dbReference>
<dbReference type="Gene3D" id="1.10.520.10">
    <property type="match status" value="2"/>
</dbReference>
<dbReference type="Gene3D" id="1.10.420.10">
    <property type="entry name" value="Peroxidase, domain 2"/>
    <property type="match status" value="2"/>
</dbReference>
<dbReference type="HAMAP" id="MF_01961">
    <property type="entry name" value="Catal_peroxid"/>
    <property type="match status" value="1"/>
</dbReference>
<dbReference type="InterPro" id="IPR000763">
    <property type="entry name" value="Catalase_peroxidase"/>
</dbReference>
<dbReference type="InterPro" id="IPR002016">
    <property type="entry name" value="Haem_peroxidase"/>
</dbReference>
<dbReference type="InterPro" id="IPR010255">
    <property type="entry name" value="Haem_peroxidase_sf"/>
</dbReference>
<dbReference type="InterPro" id="IPR019794">
    <property type="entry name" value="Peroxidases_AS"/>
</dbReference>
<dbReference type="NCBIfam" id="TIGR00198">
    <property type="entry name" value="cat_per_HPI"/>
    <property type="match status" value="1"/>
</dbReference>
<dbReference type="NCBIfam" id="NF011635">
    <property type="entry name" value="PRK15061.1"/>
    <property type="match status" value="1"/>
</dbReference>
<dbReference type="PANTHER" id="PTHR30555:SF6">
    <property type="entry name" value="CATALASE-PEROXIDASE"/>
    <property type="match status" value="1"/>
</dbReference>
<dbReference type="PANTHER" id="PTHR30555">
    <property type="entry name" value="HYDROPEROXIDASE I, BIFUNCTIONAL CATALASE-PEROXIDASE"/>
    <property type="match status" value="1"/>
</dbReference>
<dbReference type="Pfam" id="PF00141">
    <property type="entry name" value="peroxidase"/>
    <property type="match status" value="2"/>
</dbReference>
<dbReference type="PRINTS" id="PR00460">
    <property type="entry name" value="BPEROXIDASE"/>
</dbReference>
<dbReference type="PRINTS" id="PR00458">
    <property type="entry name" value="PEROXIDASE"/>
</dbReference>
<dbReference type="SUPFAM" id="SSF48113">
    <property type="entry name" value="Heme-dependent peroxidases"/>
    <property type="match status" value="2"/>
</dbReference>
<dbReference type="PROSITE" id="PS00436">
    <property type="entry name" value="PEROXIDASE_2"/>
    <property type="match status" value="1"/>
</dbReference>
<dbReference type="PROSITE" id="PS50873">
    <property type="entry name" value="PEROXIDASE_4"/>
    <property type="match status" value="1"/>
</dbReference>
<accession>A7MZ01</accession>
<comment type="function">
    <text evidence="1">Bifunctional enzyme with both catalase and broad-spectrum peroxidase activity.</text>
</comment>
<comment type="catalytic activity">
    <reaction evidence="1">
        <text>H2O2 + AH2 = A + 2 H2O</text>
        <dbReference type="Rhea" id="RHEA:30275"/>
        <dbReference type="ChEBI" id="CHEBI:13193"/>
        <dbReference type="ChEBI" id="CHEBI:15377"/>
        <dbReference type="ChEBI" id="CHEBI:16240"/>
        <dbReference type="ChEBI" id="CHEBI:17499"/>
        <dbReference type="EC" id="1.11.1.21"/>
    </reaction>
</comment>
<comment type="catalytic activity">
    <reaction evidence="1">
        <text>2 H2O2 = O2 + 2 H2O</text>
        <dbReference type="Rhea" id="RHEA:20309"/>
        <dbReference type="ChEBI" id="CHEBI:15377"/>
        <dbReference type="ChEBI" id="CHEBI:15379"/>
        <dbReference type="ChEBI" id="CHEBI:16240"/>
        <dbReference type="EC" id="1.11.1.21"/>
    </reaction>
</comment>
<comment type="cofactor">
    <cofactor evidence="1">
        <name>heme b</name>
        <dbReference type="ChEBI" id="CHEBI:60344"/>
    </cofactor>
    <text evidence="1">Binds 1 heme b (iron(II)-protoporphyrin IX) group per dimer.</text>
</comment>
<comment type="subunit">
    <text evidence="1">Homodimer or homotetramer.</text>
</comment>
<comment type="PTM">
    <text evidence="1">Formation of the three residue Trp-Tyr-Met cross-link is important for the catalase, but not the peroxidase activity of the enzyme.</text>
</comment>
<comment type="similarity">
    <text evidence="1">Belongs to the peroxidase family. Peroxidase/catalase subfamily.</text>
</comment>
<gene>
    <name evidence="1" type="primary">katG</name>
    <name type="ordered locus">VIBHAR_01773</name>
</gene>
<protein>
    <recommendedName>
        <fullName evidence="1">Catalase-peroxidase</fullName>
        <shortName evidence="1">CP</shortName>
        <ecNumber evidence="1">1.11.1.21</ecNumber>
    </recommendedName>
    <alternativeName>
        <fullName evidence="1">Peroxidase/catalase</fullName>
    </alternativeName>
</protein>
<organism>
    <name type="scientific">Vibrio campbellii (strain ATCC BAA-1116)</name>
    <dbReference type="NCBI Taxonomy" id="2902295"/>
    <lineage>
        <taxon>Bacteria</taxon>
        <taxon>Pseudomonadati</taxon>
        <taxon>Pseudomonadota</taxon>
        <taxon>Gammaproteobacteria</taxon>
        <taxon>Vibrionales</taxon>
        <taxon>Vibrionaceae</taxon>
        <taxon>Vibrio</taxon>
    </lineage>
</organism>
<name>KATG_VIBC1</name>
<sequence length="726" mass="81628">MSDKNHHSKCPVIHGANTNQQASEFNWWPKSLNLEILHQHDHKTDPMGADFNYADAFNSLDFEEVKKDLKDLMTDSQDWWPADWGHYGGLMIRMAWHSAGTYRIADGRGGASRGNQRFAPLNSWPDNGNLDKARRLLWPIKRKYGNKLSWADLMILAGNMAYESMGFKTFGFAGGREDIWHPEKDIYWGAEKEWLQPSGGENNRYSGERDLENPLAAVMMGLIYVNPEGVDGKPDPLKTAHDMRVTFARMAMNDEETVALTAGGHTVGKAHGNGDASVLEPEPEGAEIEDQGFGWLNKTSRGIGRDTVTSGVEGAWTTHPTKWDNGYFHLLFTYDWEITKSPAGAAQWEPIDIKEEDMPVDVEDSSIRHNPMMTDADMALKYDPEYRKIAERFRDNPKEFEDCFARAWFKLTHRDLGPKSRYLGPDVPAEDLIWQDPVPPVSYYLSEDNIDALKMAILNSELSIAELVSTAWDSARTYRGSDRRGGANGARIRLAPQKDWVGNEPERLQKVLNVLDEIRTMHHSPISMADLIVLAGGVGIEKAASNAGMNISVPFSQGRGDATDVMTDAESFDVLEPIHDGFRNWLKSDYVVTAEELLLERSQLMQLTAVEMTVLIGGMRVLGTNYGGTSQGVFTDNVGALTNDFFVHLTDMSYTWHPAGDNQYEIRERASGQTKWTASRVDLVFGSNSVLRSYAEVYAQDDNKEKFVQDFVAAWVKVMNNDRFDL</sequence>